<dbReference type="EMBL" id="AJ888457">
    <property type="protein sequence ID" value="CAI59893.1"/>
    <property type="molecule type" value="Genomic_DNA"/>
</dbReference>
<dbReference type="RefSeq" id="YP_319861.1">
    <property type="nucleotide sequence ID" value="NC_007409.1"/>
</dbReference>
<dbReference type="GeneID" id="4484249"/>
<dbReference type="KEGG" id="vg:4484249"/>
<dbReference type="Proteomes" id="UP000002150">
    <property type="component" value="Genome"/>
</dbReference>
<protein>
    <recommendedName>
        <fullName>Uncharacterized protein ORF161a</fullName>
    </recommendedName>
</protein>
<reference key="1">
    <citation type="journal article" date="2005" name="Nature">
        <title>Virology: independent virus development outside a host.</title>
        <authorList>
            <person name="Haring M."/>
            <person name="Vestergaard G."/>
            <person name="Rachel R."/>
            <person name="Chen L."/>
            <person name="Garrett R.A."/>
            <person name="Prangishvili D."/>
        </authorList>
    </citation>
    <scope>NUCLEOTIDE SEQUENCE [GENOMIC DNA]</scope>
</reference>
<proteinExistence type="predicted"/>
<organismHost>
    <name type="scientific">Acidianus convivator</name>
    <dbReference type="NCBI Taxonomy" id="269667"/>
</organismHost>
<feature type="chain" id="PRO_0000389063" description="Uncharacterized protein ORF161a">
    <location>
        <begin position="1"/>
        <end position="161"/>
    </location>
</feature>
<sequence length="161" mass="19237">MIRQTKTIRVFLKPKSKMVFDNERTKEIRKKHPYWFVQGDLRVNKTAVIFFSDTQGKKGIPYVPVSPGKYQVEYYDDKIVITKLMTLQKIYTCLVFPISRKAYLLDEYTIVDSTAEKNAINIYFDRPMKYKKEKMSGTWYKYIFEEDISTYFMQAKARIKS</sequence>
<accession>Q3V4S1</accession>
<organism>
    <name type="scientific">Acidianus two-tailed virus</name>
    <name type="common">ATV</name>
    <dbReference type="NCBI Taxonomy" id="315953"/>
    <lineage>
        <taxon>Viruses</taxon>
        <taxon>Viruses incertae sedis</taxon>
        <taxon>Bicaudaviridae</taxon>
        <taxon>Bicaudavirus</taxon>
    </lineage>
</organism>
<name>Y161A_ATV</name>
<keyword id="KW-1185">Reference proteome</keyword>